<proteinExistence type="inferred from homology"/>
<protein>
    <recommendedName>
        <fullName>Methyl-coenzyme M reductase II subunit gamma</fullName>
        <shortName>MCR II gamma</shortName>
        <ecNumber evidence="1">2.8.4.1</ecNumber>
    </recommendedName>
    <alternativeName>
        <fullName>Coenzyme-B sulfoethylthiotransferase gamma</fullName>
    </alternativeName>
</protein>
<dbReference type="EC" id="2.8.4.1" evidence="1"/>
<dbReference type="EMBL" id="X70765">
    <property type="protein sequence ID" value="CAA50043.1"/>
    <property type="molecule type" value="Genomic_DNA"/>
</dbReference>
<dbReference type="EMBL" id="CP002278">
    <property type="protein sequence ID" value="ADP77532.1"/>
    <property type="molecule type" value="Genomic_DNA"/>
</dbReference>
<dbReference type="PIR" id="S43900">
    <property type="entry name" value="S43900"/>
</dbReference>
<dbReference type="SMR" id="Q49173"/>
<dbReference type="STRING" id="523846.Mfer_0733"/>
<dbReference type="KEGG" id="mfv:Mfer_0733"/>
<dbReference type="HOGENOM" id="CLU_1092436_0_0_2"/>
<dbReference type="OrthoDB" id="52520at2157"/>
<dbReference type="UniPathway" id="UPA00646">
    <property type="reaction ID" value="UER00699"/>
</dbReference>
<dbReference type="Proteomes" id="UP000002315">
    <property type="component" value="Chromosome"/>
</dbReference>
<dbReference type="GO" id="GO:0050524">
    <property type="term" value="F:coenzyme-B sulfoethylthiotransferase activity"/>
    <property type="evidence" value="ECO:0007669"/>
    <property type="project" value="UniProtKB-EC"/>
</dbReference>
<dbReference type="GO" id="GO:0015948">
    <property type="term" value="P:methanogenesis"/>
    <property type="evidence" value="ECO:0007669"/>
    <property type="project" value="UniProtKB-KW"/>
</dbReference>
<dbReference type="CDD" id="cd00539">
    <property type="entry name" value="MCR_gamma"/>
    <property type="match status" value="1"/>
</dbReference>
<dbReference type="Gene3D" id="3.90.320.20">
    <property type="entry name" value="Methyl-coenzyme M reductase, gamma subunit"/>
    <property type="match status" value="1"/>
</dbReference>
<dbReference type="InterPro" id="IPR009024">
    <property type="entry name" value="Me_CoM_Rdtase_Fd-like_fold"/>
</dbReference>
<dbReference type="InterPro" id="IPR003178">
    <property type="entry name" value="Me_CoM_Rdtase_gsu"/>
</dbReference>
<dbReference type="InterPro" id="IPR036994">
    <property type="entry name" value="Me_CoM_Rdtase_gsu_sf"/>
</dbReference>
<dbReference type="NCBIfam" id="TIGR03259">
    <property type="entry name" value="met_CoM_red_gam"/>
    <property type="match status" value="1"/>
</dbReference>
<dbReference type="Pfam" id="PF02240">
    <property type="entry name" value="MCR_gamma"/>
    <property type="match status" value="1"/>
</dbReference>
<dbReference type="PIRSF" id="PIRSF000264">
    <property type="entry name" value="Meth_CoM_rd_gama"/>
    <property type="match status" value="1"/>
</dbReference>
<dbReference type="SUPFAM" id="SSF55088">
    <property type="entry name" value="Methyl-coenzyme M reductase subunits"/>
    <property type="match status" value="1"/>
</dbReference>
<comment type="function">
    <text evidence="1">Component of the methyl-coenzyme M reductase (MCR) I that catalyzes the reductive cleavage of methyl-coenzyme M (CoM-S-CH3 or 2-(methylthio)ethanesulfonate) using coenzyme B (CoB or 7-mercaptoheptanoylthreonine phosphate) as reductant which results in the production of methane and the mixed heterodisulfide of CoB and CoM (CoM-S-S-CoB). This is the final step in methanogenesis.</text>
</comment>
<comment type="catalytic activity">
    <reaction evidence="1">
        <text>coenzyme B + methyl-coenzyme M = methane + coenzyme M-coenzyme B heterodisulfide</text>
        <dbReference type="Rhea" id="RHEA:12532"/>
        <dbReference type="ChEBI" id="CHEBI:16183"/>
        <dbReference type="ChEBI" id="CHEBI:58286"/>
        <dbReference type="ChEBI" id="CHEBI:58411"/>
        <dbReference type="ChEBI" id="CHEBI:58596"/>
        <dbReference type="EC" id="2.8.4.1"/>
    </reaction>
    <physiologicalReaction direction="left-to-right" evidence="1">
        <dbReference type="Rhea" id="RHEA:12533"/>
    </physiologicalReaction>
</comment>
<comment type="cofactor">
    <cofactor evidence="1">
        <name>coenzyme F430</name>
        <dbReference type="ChEBI" id="CHEBI:60540"/>
    </cofactor>
    <text evidence="1">Binds 2 coenzyme F430 non-covalently per MCR complex. Coenzyme F430 is a yellow nickel porphinoid. Methyl-coenzyme-M reductase is activated when the enzyme-bound coenzyme F430 is reduced to the Ni(I) oxidation state.</text>
</comment>
<comment type="pathway">
    <text evidence="1">One-carbon metabolism; methyl-coenzyme M reduction; methane from methyl-coenzyme M: step 1/1.</text>
</comment>
<comment type="subunit">
    <text evidence="1">MCR is a hexamer of two alpha, two beta, and two gamma chains, forming a dimer of heterotrimers.</text>
</comment>
<comment type="similarity">
    <text evidence="2">Belongs to the methyl-coenzyme M reductase gamma subunit family.</text>
</comment>
<organism>
    <name type="scientific">Methanothermus fervidus (strain ATCC 43054 / DSM 2088 / JCM 10308 / V24 S)</name>
    <dbReference type="NCBI Taxonomy" id="523846"/>
    <lineage>
        <taxon>Archaea</taxon>
        <taxon>Methanobacteriati</taxon>
        <taxon>Methanobacteriota</taxon>
        <taxon>Methanomada group</taxon>
        <taxon>Methanobacteria</taxon>
        <taxon>Methanobacteriales</taxon>
        <taxon>Methanothermaceae</taxon>
        <taxon>Methanothermus</taxon>
    </lineage>
</organism>
<keyword id="KW-0484">Methanogenesis</keyword>
<keyword id="KW-1185">Reference proteome</keyword>
<keyword id="KW-0808">Transferase</keyword>
<gene>
    <name type="primary">mrtG</name>
    <name type="synonym">mcrIIG</name>
    <name type="ordered locus">Mfer_0733</name>
</gene>
<name>MCRZ_METFV</name>
<feature type="chain" id="PRO_0000147475" description="Methyl-coenzyme M reductase II subunit gamma">
    <location>
        <begin position="1"/>
        <end position="267"/>
    </location>
</feature>
<feature type="binding site" evidence="1">
    <location>
        <position position="123"/>
    </location>
    <ligand>
        <name>coenzyme M</name>
        <dbReference type="ChEBI" id="CHEBI:58319"/>
    </ligand>
</feature>
<accession>Q49173</accession>
<accession>E3GZ00</accession>
<evidence type="ECO:0000250" key="1">
    <source>
        <dbReference type="UniProtKB" id="P11562"/>
    </source>
</evidence>
<evidence type="ECO:0000305" key="2"/>
<reference key="1">
    <citation type="journal article" date="1994" name="Mol. Gen. Genet.">
        <title>Characterization and phylogeny of mcrII, a gene cluster encoding an isoenzyme of methyl coenzyme M reductase from hyperthermophilic Methanothermus fervidus.</title>
        <authorList>
            <person name="Lehmacher A."/>
            <person name="Klenk H.-P."/>
        </authorList>
    </citation>
    <scope>NUCLEOTIDE SEQUENCE [GENOMIC DNA]</scope>
    <source>
        <strain>ATCC 43054 / DSM 2088 / JCM 10308 / V24 S</strain>
    </source>
</reference>
<reference key="2">
    <citation type="journal article" date="2010" name="Stand. Genomic Sci.">
        <title>Complete genome sequence of Methanothermus fervidus type strain (V24S).</title>
        <authorList>
            <person name="Anderson I."/>
            <person name="Djao O.D."/>
            <person name="Misra M."/>
            <person name="Chertkov O."/>
            <person name="Nolan M."/>
            <person name="Lucas S."/>
            <person name="Lapidus A."/>
            <person name="Del Rio T.G."/>
            <person name="Tice H."/>
            <person name="Cheng J.F."/>
            <person name="Tapia R."/>
            <person name="Han C."/>
            <person name="Goodwin L."/>
            <person name="Pitluck S."/>
            <person name="Liolios K."/>
            <person name="Ivanova N."/>
            <person name="Mavromatis K."/>
            <person name="Mikhailova N."/>
            <person name="Pati A."/>
            <person name="Brambilla E."/>
            <person name="Chen A."/>
            <person name="Palaniappan K."/>
            <person name="Land M."/>
            <person name="Hauser L."/>
            <person name="Chang Y.J."/>
            <person name="Jeffries C.D."/>
            <person name="Sikorski J."/>
            <person name="Spring S."/>
            <person name="Rohde M."/>
            <person name="Eichinger K."/>
            <person name="Huber H."/>
            <person name="Wirth R."/>
            <person name="Goker M."/>
            <person name="Detter J.C."/>
            <person name="Woyke T."/>
            <person name="Bristow J."/>
            <person name="Eisen J.A."/>
            <person name="Markowitz V."/>
            <person name="Hugenholtz P."/>
            <person name="Klenk H.P."/>
            <person name="Kyrpides N.C."/>
        </authorList>
    </citation>
    <scope>NUCLEOTIDE SEQUENCE [LARGE SCALE GENOMIC DNA]</scope>
    <source>
        <strain>ATCC 43054 / DSM 2088 / JCM 10308 / V24 S</strain>
    </source>
</reference>
<sequence>MAYEPQFNPGETKIAENRRKHMNPNYELKKLREIADEDIVRVLGHRSPGESFKTVHPPLEEMDFEEDPMKDIVEPIEGAKQGTRIRYIQFADSMYNAPAQPYDRARTYMWRFRGVDTGTLSGRQVIEMRELDLEKVSKILLETEIFDPARCGIRGATVHGHSLRFDENGLMFDALQRYIYDEDSGHVVYVKDQVGRPLDQPVDMGEPLPEDELKEITTIYRKDNIGMREDEELLEVVNKIHEARTIGGFGMEVFKKDLNKRLGGANE</sequence>